<name>SUB2_TRIVH</name>
<dbReference type="EC" id="3.4.21.-"/>
<dbReference type="EMBL" id="ACYE01000509">
    <property type="protein sequence ID" value="EFE37294.1"/>
    <property type="molecule type" value="Genomic_DNA"/>
</dbReference>
<dbReference type="EMBL" id="ACYE01000301">
    <property type="protein sequence ID" value="EFE39705.1"/>
    <property type="molecule type" value="Genomic_DNA"/>
</dbReference>
<dbReference type="RefSeq" id="XP_003017939.1">
    <property type="nucleotide sequence ID" value="XM_003017893.1"/>
</dbReference>
<dbReference type="RefSeq" id="XP_003020323.1">
    <property type="nucleotide sequence ID" value="XM_003020277.1"/>
</dbReference>
<dbReference type="SMR" id="D4DLI5"/>
<dbReference type="GlyCosmos" id="D4DLI5">
    <property type="glycosylation" value="4 sites, No reported glycans"/>
</dbReference>
<dbReference type="KEGG" id="tve:TRV_05599"/>
<dbReference type="KEGG" id="tve:TRV_08059"/>
<dbReference type="HOGENOM" id="CLU_011263_6_3_1"/>
<dbReference type="OrthoDB" id="3040at34384"/>
<dbReference type="Proteomes" id="UP000008383">
    <property type="component" value="Unassembled WGS sequence"/>
</dbReference>
<dbReference type="GO" id="GO:0005576">
    <property type="term" value="C:extracellular region"/>
    <property type="evidence" value="ECO:0007669"/>
    <property type="project" value="UniProtKB-SubCell"/>
</dbReference>
<dbReference type="GO" id="GO:0004252">
    <property type="term" value="F:serine-type endopeptidase activity"/>
    <property type="evidence" value="ECO:0007669"/>
    <property type="project" value="InterPro"/>
</dbReference>
<dbReference type="GO" id="GO:0006508">
    <property type="term" value="P:proteolysis"/>
    <property type="evidence" value="ECO:0007669"/>
    <property type="project" value="UniProtKB-KW"/>
</dbReference>
<dbReference type="CDD" id="cd04077">
    <property type="entry name" value="Peptidases_S8_PCSK9_ProteinaseK_like"/>
    <property type="match status" value="1"/>
</dbReference>
<dbReference type="FunFam" id="3.40.50.200:FF:000007">
    <property type="entry name" value="Subtilisin-like serine protease"/>
    <property type="match status" value="1"/>
</dbReference>
<dbReference type="Gene3D" id="3.30.70.80">
    <property type="entry name" value="Peptidase S8 propeptide/proteinase inhibitor I9"/>
    <property type="match status" value="1"/>
</dbReference>
<dbReference type="Gene3D" id="3.40.50.200">
    <property type="entry name" value="Peptidase S8/S53 domain"/>
    <property type="match status" value="1"/>
</dbReference>
<dbReference type="InterPro" id="IPR034193">
    <property type="entry name" value="PCSK9_ProteinaseK-like"/>
</dbReference>
<dbReference type="InterPro" id="IPR000209">
    <property type="entry name" value="Peptidase_S8/S53_dom"/>
</dbReference>
<dbReference type="InterPro" id="IPR036852">
    <property type="entry name" value="Peptidase_S8/S53_dom_sf"/>
</dbReference>
<dbReference type="InterPro" id="IPR023827">
    <property type="entry name" value="Peptidase_S8_Asp-AS"/>
</dbReference>
<dbReference type="InterPro" id="IPR022398">
    <property type="entry name" value="Peptidase_S8_His-AS"/>
</dbReference>
<dbReference type="InterPro" id="IPR023828">
    <property type="entry name" value="Peptidase_S8_Ser-AS"/>
</dbReference>
<dbReference type="InterPro" id="IPR050131">
    <property type="entry name" value="Peptidase_S8_subtilisin-like"/>
</dbReference>
<dbReference type="InterPro" id="IPR015500">
    <property type="entry name" value="Peptidase_S8_subtilisin-rel"/>
</dbReference>
<dbReference type="InterPro" id="IPR010259">
    <property type="entry name" value="S8pro/Inhibitor_I9"/>
</dbReference>
<dbReference type="InterPro" id="IPR037045">
    <property type="entry name" value="S8pro/Inhibitor_I9_sf"/>
</dbReference>
<dbReference type="PANTHER" id="PTHR43806:SF58">
    <property type="entry name" value="ALKALINE PROTEASE 1-RELATED"/>
    <property type="match status" value="1"/>
</dbReference>
<dbReference type="PANTHER" id="PTHR43806">
    <property type="entry name" value="PEPTIDASE S8"/>
    <property type="match status" value="1"/>
</dbReference>
<dbReference type="Pfam" id="PF05922">
    <property type="entry name" value="Inhibitor_I9"/>
    <property type="match status" value="1"/>
</dbReference>
<dbReference type="Pfam" id="PF00082">
    <property type="entry name" value="Peptidase_S8"/>
    <property type="match status" value="1"/>
</dbReference>
<dbReference type="PRINTS" id="PR00723">
    <property type="entry name" value="SUBTILISIN"/>
</dbReference>
<dbReference type="SUPFAM" id="SSF52743">
    <property type="entry name" value="Subtilisin-like"/>
    <property type="match status" value="1"/>
</dbReference>
<dbReference type="PROSITE" id="PS51892">
    <property type="entry name" value="SUBTILASE"/>
    <property type="match status" value="1"/>
</dbReference>
<dbReference type="PROSITE" id="PS00136">
    <property type="entry name" value="SUBTILASE_ASP"/>
    <property type="match status" value="1"/>
</dbReference>
<dbReference type="PROSITE" id="PS00137">
    <property type="entry name" value="SUBTILASE_HIS"/>
    <property type="match status" value="1"/>
</dbReference>
<dbReference type="PROSITE" id="PS00138">
    <property type="entry name" value="SUBTILASE_SER"/>
    <property type="match status" value="1"/>
</dbReference>
<organism>
    <name type="scientific">Trichophyton verrucosum (strain HKI 0517)</name>
    <dbReference type="NCBI Taxonomy" id="663202"/>
    <lineage>
        <taxon>Eukaryota</taxon>
        <taxon>Fungi</taxon>
        <taxon>Dikarya</taxon>
        <taxon>Ascomycota</taxon>
        <taxon>Pezizomycotina</taxon>
        <taxon>Eurotiomycetes</taxon>
        <taxon>Eurotiomycetidae</taxon>
        <taxon>Onygenales</taxon>
        <taxon>Arthrodermataceae</taxon>
        <taxon>Trichophyton</taxon>
    </lineage>
</organism>
<sequence length="421" mass="45636">MQLLNFGLLLLPFVAGDLAPQPEPLLAGPSDVVPGQYIVTLKEGLTSAQIRDHKKWVSSVHRANLDSFAAGASGVETEGIMKHFHIHDLNMYSGGFDEKTVEDLSRNPYVKSVHPDQHVYLAKTVTQRQARWGLGYMSSKGKPVPLHSTLVDYSYDDKAGEGVWAYVLDTGINVNHIEFEGRAILGHNAIPNKPHTDEFGHGTYVAGIIAGKTYGVAKKANVVSAKAFDTGSSTYNYILETYDWIVRNITDSNRKNKAVINLSISGAKYQPFDDAVEKAFKAGITTVVAAGNDGKDAKNNTPASSPNAITVGAVRWENTRPSFSNYGKLVDIWAPGELIKSCWKGGNNATSTQSGTSAASPHVAGLVAYLMSIENLPSPSAVTARVLNLTIPNLVKDAKDSPNRVAYNGIQERKFTLPKYY</sequence>
<keyword id="KW-0325">Glycoprotein</keyword>
<keyword id="KW-0378">Hydrolase</keyword>
<keyword id="KW-0645">Protease</keyword>
<keyword id="KW-0964">Secreted</keyword>
<keyword id="KW-0720">Serine protease</keyword>
<keyword id="KW-0732">Signal</keyword>
<keyword id="KW-0843">Virulence</keyword>
<keyword id="KW-0865">Zymogen</keyword>
<protein>
    <recommendedName>
        <fullName>Subtilisin-like protease 2</fullName>
        <ecNumber>3.4.21.-</ecNumber>
    </recommendedName>
</protein>
<evidence type="ECO:0000250" key="1"/>
<evidence type="ECO:0000255" key="2"/>
<evidence type="ECO:0000255" key="3">
    <source>
        <dbReference type="PROSITE-ProRule" id="PRU01240"/>
    </source>
</evidence>
<evidence type="ECO:0000305" key="4"/>
<feature type="signal peptide" evidence="2">
    <location>
        <begin position="1"/>
        <end position="16"/>
    </location>
</feature>
<feature type="propeptide" id="PRO_0000397784" evidence="1">
    <location>
        <begin position="17"/>
        <end position="122"/>
    </location>
</feature>
<feature type="chain" id="PRO_0000397785" description="Subtilisin-like protease 2">
    <location>
        <begin position="123"/>
        <end position="421"/>
    </location>
</feature>
<feature type="domain" description="Inhibitor I9" evidence="2">
    <location>
        <begin position="36"/>
        <end position="122"/>
    </location>
</feature>
<feature type="domain" description="Peptidase S8" evidence="3">
    <location>
        <begin position="131"/>
        <end position="421"/>
    </location>
</feature>
<feature type="active site" description="Charge relay system" evidence="3">
    <location>
        <position position="169"/>
    </location>
</feature>
<feature type="active site" description="Charge relay system" evidence="3">
    <location>
        <position position="201"/>
    </location>
</feature>
<feature type="active site" description="Charge relay system" evidence="3">
    <location>
        <position position="357"/>
    </location>
</feature>
<feature type="glycosylation site" description="N-linked (GlcNAc...) asparagine" evidence="2">
    <location>
        <position position="248"/>
    </location>
</feature>
<feature type="glycosylation site" description="N-linked (GlcNAc...) asparagine" evidence="2">
    <location>
        <position position="261"/>
    </location>
</feature>
<feature type="glycosylation site" description="N-linked (GlcNAc...) asparagine" evidence="2">
    <location>
        <position position="348"/>
    </location>
</feature>
<feature type="glycosylation site" description="N-linked (GlcNAc...) asparagine" evidence="2">
    <location>
        <position position="388"/>
    </location>
</feature>
<proteinExistence type="inferred from homology"/>
<reference key="1">
    <citation type="journal article" date="2011" name="Genome Biol.">
        <title>Comparative and functional genomics provide insights into the pathogenicity of dermatophytic fungi.</title>
        <authorList>
            <person name="Burmester A."/>
            <person name="Shelest E."/>
            <person name="Gloeckner G."/>
            <person name="Heddergott C."/>
            <person name="Schindler S."/>
            <person name="Staib P."/>
            <person name="Heidel A."/>
            <person name="Felder M."/>
            <person name="Petzold A."/>
            <person name="Szafranski K."/>
            <person name="Feuermann M."/>
            <person name="Pedruzzi I."/>
            <person name="Priebe S."/>
            <person name="Groth M."/>
            <person name="Winkler R."/>
            <person name="Li W."/>
            <person name="Kniemeyer O."/>
            <person name="Schroeckh V."/>
            <person name="Hertweck C."/>
            <person name="Hube B."/>
            <person name="White T.C."/>
            <person name="Platzer M."/>
            <person name="Guthke R."/>
            <person name="Heitman J."/>
            <person name="Woestemeyer J."/>
            <person name="Zipfel P.F."/>
            <person name="Monod M."/>
            <person name="Brakhage A.A."/>
        </authorList>
    </citation>
    <scope>NUCLEOTIDE SEQUENCE [LARGE SCALE GENOMIC DNA]</scope>
    <source>
        <strain>HKI 0517</strain>
    </source>
</reference>
<accession>D4DLI5</accession>
<accession>D4DEN0</accession>
<comment type="function">
    <text evidence="1">Secreted subtilisin-like serine protease with keratinolytic activity that contributes to pathogenicity.</text>
</comment>
<comment type="subcellular location">
    <subcellularLocation>
        <location evidence="1">Secreted</location>
    </subcellularLocation>
</comment>
<comment type="similarity">
    <text evidence="4">Belongs to the peptidase S8 family.</text>
</comment>
<gene>
    <name type="primary">SUB2</name>
    <name type="ORF">TRV_08059/TRV_05599</name>
</gene>